<feature type="chain" id="PRO_0000308361" description="Ras-like protein family member 11A">
    <location>
        <begin position="1"/>
        <end position="242"/>
    </location>
</feature>
<feature type="region of interest" description="Small GTPase-like">
    <location>
        <begin position="17"/>
        <end position="241"/>
    </location>
</feature>
<feature type="binding site" evidence="2">
    <location>
        <begin position="34"/>
        <end position="41"/>
    </location>
    <ligand>
        <name>GTP</name>
        <dbReference type="ChEBI" id="CHEBI:37565"/>
    </ligand>
</feature>
<feature type="binding site" evidence="2">
    <location>
        <begin position="81"/>
        <end position="88"/>
    </location>
    <ligand>
        <name>GTP</name>
        <dbReference type="ChEBI" id="CHEBI:37565"/>
    </ligand>
</feature>
<feature type="binding site" evidence="2">
    <location>
        <begin position="147"/>
        <end position="150"/>
    </location>
    <ligand>
        <name>GTP</name>
        <dbReference type="ChEBI" id="CHEBI:37565"/>
    </ligand>
</feature>
<feature type="splice variant" id="VSP_052584" description="In isoform 2." evidence="7">
    <location>
        <begin position="1"/>
        <end position="42"/>
    </location>
</feature>
<reference evidence="8 10" key="1">
    <citation type="journal article" date="2005" name="Science">
        <title>The transcriptional landscape of the mammalian genome.</title>
        <authorList>
            <person name="Carninci P."/>
            <person name="Kasukawa T."/>
            <person name="Katayama S."/>
            <person name="Gough J."/>
            <person name="Frith M.C."/>
            <person name="Maeda N."/>
            <person name="Oyama R."/>
            <person name="Ravasi T."/>
            <person name="Lenhard B."/>
            <person name="Wells C."/>
            <person name="Kodzius R."/>
            <person name="Shimokawa K."/>
            <person name="Bajic V.B."/>
            <person name="Brenner S.E."/>
            <person name="Batalov S."/>
            <person name="Forrest A.R."/>
            <person name="Zavolan M."/>
            <person name="Davis M.J."/>
            <person name="Wilming L.G."/>
            <person name="Aidinis V."/>
            <person name="Allen J.E."/>
            <person name="Ambesi-Impiombato A."/>
            <person name="Apweiler R."/>
            <person name="Aturaliya R.N."/>
            <person name="Bailey T.L."/>
            <person name="Bansal M."/>
            <person name="Baxter L."/>
            <person name="Beisel K.W."/>
            <person name="Bersano T."/>
            <person name="Bono H."/>
            <person name="Chalk A.M."/>
            <person name="Chiu K.P."/>
            <person name="Choudhary V."/>
            <person name="Christoffels A."/>
            <person name="Clutterbuck D.R."/>
            <person name="Crowe M.L."/>
            <person name="Dalla E."/>
            <person name="Dalrymple B.P."/>
            <person name="de Bono B."/>
            <person name="Della Gatta G."/>
            <person name="di Bernardo D."/>
            <person name="Down T."/>
            <person name="Engstrom P."/>
            <person name="Fagiolini M."/>
            <person name="Faulkner G."/>
            <person name="Fletcher C.F."/>
            <person name="Fukushima T."/>
            <person name="Furuno M."/>
            <person name="Futaki S."/>
            <person name="Gariboldi M."/>
            <person name="Georgii-Hemming P."/>
            <person name="Gingeras T.R."/>
            <person name="Gojobori T."/>
            <person name="Green R.E."/>
            <person name="Gustincich S."/>
            <person name="Harbers M."/>
            <person name="Hayashi Y."/>
            <person name="Hensch T.K."/>
            <person name="Hirokawa N."/>
            <person name="Hill D."/>
            <person name="Huminiecki L."/>
            <person name="Iacono M."/>
            <person name="Ikeo K."/>
            <person name="Iwama A."/>
            <person name="Ishikawa T."/>
            <person name="Jakt M."/>
            <person name="Kanapin A."/>
            <person name="Katoh M."/>
            <person name="Kawasawa Y."/>
            <person name="Kelso J."/>
            <person name="Kitamura H."/>
            <person name="Kitano H."/>
            <person name="Kollias G."/>
            <person name="Krishnan S.P."/>
            <person name="Kruger A."/>
            <person name="Kummerfeld S.K."/>
            <person name="Kurochkin I.V."/>
            <person name="Lareau L.F."/>
            <person name="Lazarevic D."/>
            <person name="Lipovich L."/>
            <person name="Liu J."/>
            <person name="Liuni S."/>
            <person name="McWilliam S."/>
            <person name="Madan Babu M."/>
            <person name="Madera M."/>
            <person name="Marchionni L."/>
            <person name="Matsuda H."/>
            <person name="Matsuzawa S."/>
            <person name="Miki H."/>
            <person name="Mignone F."/>
            <person name="Miyake S."/>
            <person name="Morris K."/>
            <person name="Mottagui-Tabar S."/>
            <person name="Mulder N."/>
            <person name="Nakano N."/>
            <person name="Nakauchi H."/>
            <person name="Ng P."/>
            <person name="Nilsson R."/>
            <person name="Nishiguchi S."/>
            <person name="Nishikawa S."/>
            <person name="Nori F."/>
            <person name="Ohara O."/>
            <person name="Okazaki Y."/>
            <person name="Orlando V."/>
            <person name="Pang K.C."/>
            <person name="Pavan W.J."/>
            <person name="Pavesi G."/>
            <person name="Pesole G."/>
            <person name="Petrovsky N."/>
            <person name="Piazza S."/>
            <person name="Reed J."/>
            <person name="Reid J.F."/>
            <person name="Ring B.Z."/>
            <person name="Ringwald M."/>
            <person name="Rost B."/>
            <person name="Ruan Y."/>
            <person name="Salzberg S.L."/>
            <person name="Sandelin A."/>
            <person name="Schneider C."/>
            <person name="Schoenbach C."/>
            <person name="Sekiguchi K."/>
            <person name="Semple C.A."/>
            <person name="Seno S."/>
            <person name="Sessa L."/>
            <person name="Sheng Y."/>
            <person name="Shibata Y."/>
            <person name="Shimada H."/>
            <person name="Shimada K."/>
            <person name="Silva D."/>
            <person name="Sinclair B."/>
            <person name="Sperling S."/>
            <person name="Stupka E."/>
            <person name="Sugiura K."/>
            <person name="Sultana R."/>
            <person name="Takenaka Y."/>
            <person name="Taki K."/>
            <person name="Tammoja K."/>
            <person name="Tan S.L."/>
            <person name="Tang S."/>
            <person name="Taylor M.S."/>
            <person name="Tegner J."/>
            <person name="Teichmann S.A."/>
            <person name="Ueda H.R."/>
            <person name="van Nimwegen E."/>
            <person name="Verardo R."/>
            <person name="Wei C.L."/>
            <person name="Yagi K."/>
            <person name="Yamanishi H."/>
            <person name="Zabarovsky E."/>
            <person name="Zhu S."/>
            <person name="Zimmer A."/>
            <person name="Hide W."/>
            <person name="Bult C."/>
            <person name="Grimmond S.M."/>
            <person name="Teasdale R.D."/>
            <person name="Liu E.T."/>
            <person name="Brusic V."/>
            <person name="Quackenbush J."/>
            <person name="Wahlestedt C."/>
            <person name="Mattick J.S."/>
            <person name="Hume D.A."/>
            <person name="Kai C."/>
            <person name="Sasaki D."/>
            <person name="Tomaru Y."/>
            <person name="Fukuda S."/>
            <person name="Kanamori-Katayama M."/>
            <person name="Suzuki M."/>
            <person name="Aoki J."/>
            <person name="Arakawa T."/>
            <person name="Iida J."/>
            <person name="Imamura K."/>
            <person name="Itoh M."/>
            <person name="Kato T."/>
            <person name="Kawaji H."/>
            <person name="Kawagashira N."/>
            <person name="Kawashima T."/>
            <person name="Kojima M."/>
            <person name="Kondo S."/>
            <person name="Konno H."/>
            <person name="Nakano K."/>
            <person name="Ninomiya N."/>
            <person name="Nishio T."/>
            <person name="Okada M."/>
            <person name="Plessy C."/>
            <person name="Shibata K."/>
            <person name="Shiraki T."/>
            <person name="Suzuki S."/>
            <person name="Tagami M."/>
            <person name="Waki K."/>
            <person name="Watahiki A."/>
            <person name="Okamura-Oho Y."/>
            <person name="Suzuki H."/>
            <person name="Kawai J."/>
            <person name="Hayashizaki Y."/>
        </authorList>
    </citation>
    <scope>NUCLEOTIDE SEQUENCE [LARGE SCALE MRNA] (ISOFORM 1)</scope>
    <source>
        <strain evidence="10">C57BL/6J</strain>
        <tissue evidence="10">Embryo</tissue>
    </source>
</reference>
<reference key="2">
    <citation type="journal article" date="2009" name="PLoS Biol.">
        <title>Lineage-specific biology revealed by a finished genome assembly of the mouse.</title>
        <authorList>
            <person name="Church D.M."/>
            <person name="Goodstadt L."/>
            <person name="Hillier L.W."/>
            <person name="Zody M.C."/>
            <person name="Goldstein S."/>
            <person name="She X."/>
            <person name="Bult C.J."/>
            <person name="Agarwala R."/>
            <person name="Cherry J.L."/>
            <person name="DiCuccio M."/>
            <person name="Hlavina W."/>
            <person name="Kapustin Y."/>
            <person name="Meric P."/>
            <person name="Maglott D."/>
            <person name="Birtle Z."/>
            <person name="Marques A.C."/>
            <person name="Graves T."/>
            <person name="Zhou S."/>
            <person name="Teague B."/>
            <person name="Potamousis K."/>
            <person name="Churas C."/>
            <person name="Place M."/>
            <person name="Herschleb J."/>
            <person name="Runnheim R."/>
            <person name="Forrest D."/>
            <person name="Amos-Landgraf J."/>
            <person name="Schwartz D.C."/>
            <person name="Cheng Z."/>
            <person name="Lindblad-Toh K."/>
            <person name="Eichler E.E."/>
            <person name="Ponting C.P."/>
        </authorList>
    </citation>
    <scope>NUCLEOTIDE SEQUENCE [LARGE SCALE GENOMIC DNA]</scope>
    <source>
        <strain>C57BL/6J</strain>
    </source>
</reference>
<reference evidence="8 9" key="3">
    <citation type="journal article" date="2004" name="Genome Res.">
        <title>The status, quality, and expansion of the NIH full-length cDNA project: the Mammalian Gene Collection (MGC).</title>
        <authorList>
            <consortium name="The MGC Project Team"/>
        </authorList>
    </citation>
    <scope>NUCLEOTIDE SEQUENCE [LARGE SCALE MRNA] (ISOFORM 2)</scope>
</reference>
<reference evidence="8 11" key="4">
    <citation type="journal article" date="2004" name="Biochem. Biophys. Res. Commun.">
        <title>Rasl11a, member of a novel small monomeric GTPase gene family, is differentially expressed in prostate tumors.</title>
        <authorList>
            <person name="Louro R."/>
            <person name="Nakaya H.I."/>
            <person name="Paquola A.C.M."/>
            <person name="Martins E.A.L."/>
            <person name="da Silva A.M."/>
            <person name="Verjovski-Almeida S."/>
            <person name="Reis E.M."/>
        </authorList>
    </citation>
    <scope>IDENTIFICATION (ISOFORM 1)</scope>
</reference>
<reference key="5">
    <citation type="journal article" date="2010" name="EMBO J.">
        <title>Chromatin association and regulation of rDNA transcription by the Ras-family protein RasL11a.</title>
        <authorList>
            <person name="Pistoni M."/>
            <person name="Verrecchia A."/>
            <person name="Doni M."/>
            <person name="Guccione E."/>
            <person name="Amati B."/>
        </authorList>
    </citation>
    <scope>FUNCTION</scope>
    <scope>SUBCELLULAR LOCATION</scope>
    <scope>INTERACTION WITH UBTF</scope>
</reference>
<organism>
    <name type="scientific">Mus musculus</name>
    <name type="common">Mouse</name>
    <dbReference type="NCBI Taxonomy" id="10090"/>
    <lineage>
        <taxon>Eukaryota</taxon>
        <taxon>Metazoa</taxon>
        <taxon>Chordata</taxon>
        <taxon>Craniata</taxon>
        <taxon>Vertebrata</taxon>
        <taxon>Euteleostomi</taxon>
        <taxon>Mammalia</taxon>
        <taxon>Eutheria</taxon>
        <taxon>Euarchontoglires</taxon>
        <taxon>Glires</taxon>
        <taxon>Rodentia</taxon>
        <taxon>Myomorpha</taxon>
        <taxon>Muroidea</taxon>
        <taxon>Muridae</taxon>
        <taxon>Murinae</taxon>
        <taxon>Mus</taxon>
        <taxon>Mus</taxon>
    </lineage>
</organism>
<keyword id="KW-0025">Alternative splicing</keyword>
<keyword id="KW-0342">GTP-binding</keyword>
<keyword id="KW-0378">Hydrolase</keyword>
<keyword id="KW-0547">Nucleotide-binding</keyword>
<keyword id="KW-0539">Nucleus</keyword>
<keyword id="KW-1185">Reference proteome</keyword>
<keyword id="KW-0804">Transcription</keyword>
<keyword id="KW-0805">Transcription regulation</keyword>
<dbReference type="EC" id="3.6.5.2" evidence="1"/>
<dbReference type="EMBL" id="AK004371">
    <property type="protein sequence ID" value="BAE43176.1"/>
    <property type="molecule type" value="mRNA"/>
</dbReference>
<dbReference type="EMBL" id="AC124828">
    <property type="status" value="NOT_ANNOTATED_CDS"/>
    <property type="molecule type" value="Genomic_DNA"/>
</dbReference>
<dbReference type="EMBL" id="BC118009">
    <property type="protein sequence ID" value="AAI18010.1"/>
    <property type="molecule type" value="mRNA"/>
</dbReference>
<dbReference type="EMBL" id="BK001706">
    <property type="protein sequence ID" value="DAA02248.1"/>
    <property type="molecule type" value="mRNA"/>
</dbReference>
<dbReference type="CCDS" id="CCDS39396.1">
    <molecule id="Q6IMB1-1"/>
</dbReference>
<dbReference type="RefSeq" id="NP_081140.1">
    <molecule id="Q6IMB1-1"/>
    <property type="nucleotide sequence ID" value="NM_026864.1"/>
</dbReference>
<dbReference type="SMR" id="Q6IMB1"/>
<dbReference type="FunCoup" id="Q6IMB1">
    <property type="interactions" value="528"/>
</dbReference>
<dbReference type="IntAct" id="Q6IMB1">
    <property type="interactions" value="4"/>
</dbReference>
<dbReference type="MINT" id="Q6IMB1"/>
<dbReference type="STRING" id="10090.ENSMUSP00000031646"/>
<dbReference type="iPTMnet" id="Q6IMB1"/>
<dbReference type="PhosphoSitePlus" id="Q6IMB1"/>
<dbReference type="PaxDb" id="10090-ENSMUSP00000031646"/>
<dbReference type="ProteomicsDB" id="260997">
    <molecule id="Q6IMB1-1"/>
</dbReference>
<dbReference type="ProteomicsDB" id="260998">
    <molecule id="Q6IMB1-2"/>
</dbReference>
<dbReference type="Pumba" id="Q6IMB1"/>
<dbReference type="Antibodypedia" id="62567">
    <property type="antibodies" value="23 antibodies from 11 providers"/>
</dbReference>
<dbReference type="Ensembl" id="ENSMUST00000031646.8">
    <molecule id="Q6IMB1-1"/>
    <property type="protein sequence ID" value="ENSMUSP00000031646.8"/>
    <property type="gene ID" value="ENSMUSG00000029641.10"/>
</dbReference>
<dbReference type="GeneID" id="68895"/>
<dbReference type="KEGG" id="mmu:68895"/>
<dbReference type="UCSC" id="uc009anm.1">
    <molecule id="Q6IMB1-1"/>
    <property type="organism name" value="mouse"/>
</dbReference>
<dbReference type="AGR" id="MGI:1916145"/>
<dbReference type="CTD" id="387496"/>
<dbReference type="MGI" id="MGI:1916145">
    <property type="gene designation" value="Rasl11a"/>
</dbReference>
<dbReference type="VEuPathDB" id="HostDB:ENSMUSG00000029641"/>
<dbReference type="eggNOG" id="KOG0395">
    <property type="taxonomic scope" value="Eukaryota"/>
</dbReference>
<dbReference type="GeneTree" id="ENSGT00940000161208"/>
<dbReference type="HOGENOM" id="CLU_041217_9_7_1"/>
<dbReference type="InParanoid" id="Q6IMB1"/>
<dbReference type="OMA" id="TMSGHCL"/>
<dbReference type="OrthoDB" id="18798at2759"/>
<dbReference type="PhylomeDB" id="Q6IMB1"/>
<dbReference type="TreeFam" id="TF318030"/>
<dbReference type="BioGRID-ORCS" id="68895">
    <property type="hits" value="2 hits in 78 CRISPR screens"/>
</dbReference>
<dbReference type="PRO" id="PR:Q6IMB1"/>
<dbReference type="Proteomes" id="UP000000589">
    <property type="component" value="Chromosome 5"/>
</dbReference>
<dbReference type="RNAct" id="Q6IMB1">
    <property type="molecule type" value="protein"/>
</dbReference>
<dbReference type="Bgee" id="ENSMUSG00000029641">
    <property type="expression patterns" value="Expressed in renal corpuscle and 105 other cell types or tissues"/>
</dbReference>
<dbReference type="GO" id="GO:0005730">
    <property type="term" value="C:nucleolus"/>
    <property type="evidence" value="ECO:0000314"/>
    <property type="project" value="UniProtKB"/>
</dbReference>
<dbReference type="GO" id="GO:0003925">
    <property type="term" value="F:G protein activity"/>
    <property type="evidence" value="ECO:0007669"/>
    <property type="project" value="UniProtKB-EC"/>
</dbReference>
<dbReference type="GO" id="GO:0005525">
    <property type="term" value="F:GTP binding"/>
    <property type="evidence" value="ECO:0007669"/>
    <property type="project" value="UniProtKB-KW"/>
</dbReference>
<dbReference type="GO" id="GO:0045943">
    <property type="term" value="P:positive regulation of transcription by RNA polymerase I"/>
    <property type="evidence" value="ECO:0000314"/>
    <property type="project" value="UniProtKB"/>
</dbReference>
<dbReference type="CDD" id="cd04146">
    <property type="entry name" value="RERG_RasL11_like"/>
    <property type="match status" value="1"/>
</dbReference>
<dbReference type="FunFam" id="3.40.50.300:FF:000718">
    <property type="entry name" value="Ras-like protein family member 11A"/>
    <property type="match status" value="1"/>
</dbReference>
<dbReference type="Gene3D" id="3.40.50.300">
    <property type="entry name" value="P-loop containing nucleotide triphosphate hydrolases"/>
    <property type="match status" value="1"/>
</dbReference>
<dbReference type="InterPro" id="IPR027417">
    <property type="entry name" value="P-loop_NTPase"/>
</dbReference>
<dbReference type="InterPro" id="IPR051065">
    <property type="entry name" value="Ras-related_GTPase"/>
</dbReference>
<dbReference type="InterPro" id="IPR005225">
    <property type="entry name" value="Small_GTP-bd"/>
</dbReference>
<dbReference type="InterPro" id="IPR001806">
    <property type="entry name" value="Small_GTPase"/>
</dbReference>
<dbReference type="NCBIfam" id="TIGR00231">
    <property type="entry name" value="small_GTP"/>
    <property type="match status" value="1"/>
</dbReference>
<dbReference type="PANTHER" id="PTHR45704">
    <property type="entry name" value="RAS-LIKE FAMILY MEMBER 11"/>
    <property type="match status" value="1"/>
</dbReference>
<dbReference type="Pfam" id="PF00071">
    <property type="entry name" value="Ras"/>
    <property type="match status" value="1"/>
</dbReference>
<dbReference type="PRINTS" id="PR00449">
    <property type="entry name" value="RASTRNSFRMNG"/>
</dbReference>
<dbReference type="SMART" id="SM00175">
    <property type="entry name" value="RAB"/>
    <property type="match status" value="1"/>
</dbReference>
<dbReference type="SMART" id="SM00173">
    <property type="entry name" value="RAS"/>
    <property type="match status" value="1"/>
</dbReference>
<dbReference type="SMART" id="SM00174">
    <property type="entry name" value="RHO"/>
    <property type="match status" value="1"/>
</dbReference>
<dbReference type="SUPFAM" id="SSF52540">
    <property type="entry name" value="P-loop containing nucleoside triphosphate hydrolases"/>
    <property type="match status" value="1"/>
</dbReference>
<dbReference type="PROSITE" id="PS51421">
    <property type="entry name" value="RAS"/>
    <property type="match status" value="1"/>
</dbReference>
<evidence type="ECO:0000250" key="1">
    <source>
        <dbReference type="UniProtKB" id="P01116"/>
    </source>
</evidence>
<evidence type="ECO:0000250" key="2">
    <source>
        <dbReference type="UniProtKB" id="Q96A58"/>
    </source>
</evidence>
<evidence type="ECO:0000255" key="3"/>
<evidence type="ECO:0000269" key="4">
    <source>
    </source>
</evidence>
<evidence type="ECO:0000269" key="5">
    <source>
    </source>
</evidence>
<evidence type="ECO:0000269" key="6">
    <source>
    </source>
</evidence>
<evidence type="ECO:0000303" key="7">
    <source>
    </source>
</evidence>
<evidence type="ECO:0000305" key="8"/>
<evidence type="ECO:0000312" key="9">
    <source>
        <dbReference type="EMBL" id="AAI18010.1"/>
    </source>
</evidence>
<evidence type="ECO:0000312" key="10">
    <source>
        <dbReference type="EMBL" id="BAE43176.1"/>
    </source>
</evidence>
<evidence type="ECO:0000312" key="11">
    <source>
        <dbReference type="EMBL" id="DAA02248.1"/>
    </source>
</evidence>
<evidence type="ECO:0000312" key="12">
    <source>
        <dbReference type="MGI" id="MGI:1916145"/>
    </source>
</evidence>
<protein>
    <recommendedName>
        <fullName>Ras-like protein family member 11A</fullName>
        <ecNumber evidence="1">3.6.5.2</ecNumber>
    </recommendedName>
</protein>
<accession>Q6IMB1</accession>
<accession>Q148R6</accession>
<name>RSLBA_MOUSE</name>
<proteinExistence type="evidence at protein level"/>
<sequence>MRPLTMSGHFLLAPIPESSSDYLLPKDIKLAVLGAGCVGKSAMIVRFLTKRFIGDYEPNTGKLYSRLVYVEGDQLSLQIQDTPGGIQAQDSLSQMVDSLTKSVHWAEGFLLVYSITDYESYQSIRPLYQHIRKVHPDGKAPIFIVGNKGDLLHARQVQTHEGLQLANELGSLFLEISTSENYEDVCDVFQHLCKEVIKVHRLGGERRRASVIPRPRSPNMQDLKRRFRQALSSKAKASSALG</sequence>
<comment type="function">
    <text evidence="6">Regulator of rDNA transcription. Acts in cooperation UBF/UBTF and positively regulates RNA polymerase I transcription.</text>
</comment>
<comment type="catalytic activity">
    <reaction evidence="1">
        <text>GTP + H2O = GDP + phosphate + H(+)</text>
        <dbReference type="Rhea" id="RHEA:19669"/>
        <dbReference type="ChEBI" id="CHEBI:15377"/>
        <dbReference type="ChEBI" id="CHEBI:15378"/>
        <dbReference type="ChEBI" id="CHEBI:37565"/>
        <dbReference type="ChEBI" id="CHEBI:43474"/>
        <dbReference type="ChEBI" id="CHEBI:58189"/>
        <dbReference type="EC" id="3.6.5.2"/>
    </reaction>
</comment>
<comment type="subunit">
    <text evidence="6">Interacts with UBF/UBTF.</text>
</comment>
<comment type="subcellular location">
    <subcellularLocation>
        <location evidence="6">Nucleus</location>
        <location evidence="6">Nucleolus</location>
    </subcellularLocation>
    <text>Associates with rDNA transcription unit throughout the cell cycle.</text>
</comment>
<comment type="alternative products">
    <event type="alternative splicing"/>
    <isoform>
        <id>Q6IMB1-1</id>
        <name evidence="5">1</name>
        <sequence type="displayed"/>
    </isoform>
    <isoform>
        <id>Q6IMB1-2</id>
        <name evidence="4">2</name>
        <sequence type="described" ref="VSP_052584"/>
    </isoform>
</comment>
<comment type="similarity">
    <text evidence="3">Belongs to the small GTPase superfamily. Ras family.</text>
</comment>
<comment type="caution">
    <text evidence="8">Although highly related to the Ras family, lacks the conserved prenylation motif at the C-terminus, which serves to target Ras proteins to membrane compartments.</text>
</comment>
<gene>
    <name evidence="12" type="primary">Rasl11a</name>
</gene>